<keyword id="KW-0067">ATP-binding</keyword>
<keyword id="KW-0315">Glutamine amidotransferase</keyword>
<keyword id="KW-0436">Ligase</keyword>
<keyword id="KW-0460">Magnesium</keyword>
<keyword id="KW-0479">Metal-binding</keyword>
<keyword id="KW-0547">Nucleotide-binding</keyword>
<keyword id="KW-0665">Pyrimidine biosynthesis</keyword>
<keyword id="KW-1185">Reference proteome</keyword>
<name>PYRG_CALS4</name>
<gene>
    <name evidence="1" type="primary">pyrG</name>
    <name type="ordered locus">TTE2609</name>
</gene>
<proteinExistence type="inferred from homology"/>
<sequence length="537" mass="60602">MAKYIFVTGGVVSSLGKGITAASLGRLLKSRGLSVAMQKFDPYINIDPGTMSPYQHGEVFVTEDGAETDLDLGHYERFIDVNLTKNSNVTAGKIYWSVITKERKGDYLGATVQVIPHITDEIKERVYRVAKEKNVDVVITEIGGTVGDIESLPFLEAIRQVAIEQGRENVMFIHVTLVPHLGNTGELKTKPTQHSVKELRSIGIQPDMIVCRTELPLPQELREKIALFCNVSVEAVIENRDVESIYQVPLELERQKVDEYVIKRLNLPLGQSDLKEWREYVEKEKNPEHQVEVALVGKYVDLHDAYISVVEALKHAGVYHKTAVNIRWVNAEKVNDKTVDELLKGADGILVPGGFGDRGIEGKIRAIQYARENKIPYLGLCLGMQCAVIEFARNVAGLKGANSTEFDPNTPHPVIDLMPEQKDIDEKGGTMRLGVYPCKVIEGTKAYEVYKDELVYERHRHRYEFNNQYRELLTSKGLVISGLSPDERLVEIIELKDHPYFVATQFHPEFKSRPLNPHPLFRDFVKAMLNLKINNAE</sequence>
<comment type="function">
    <text evidence="1">Catalyzes the ATP-dependent amination of UTP to CTP with either L-glutamine or ammonia as the source of nitrogen. Regulates intracellular CTP levels through interactions with the four ribonucleotide triphosphates.</text>
</comment>
<comment type="catalytic activity">
    <reaction evidence="1">
        <text>UTP + L-glutamine + ATP + H2O = CTP + L-glutamate + ADP + phosphate + 2 H(+)</text>
        <dbReference type="Rhea" id="RHEA:26426"/>
        <dbReference type="ChEBI" id="CHEBI:15377"/>
        <dbReference type="ChEBI" id="CHEBI:15378"/>
        <dbReference type="ChEBI" id="CHEBI:29985"/>
        <dbReference type="ChEBI" id="CHEBI:30616"/>
        <dbReference type="ChEBI" id="CHEBI:37563"/>
        <dbReference type="ChEBI" id="CHEBI:43474"/>
        <dbReference type="ChEBI" id="CHEBI:46398"/>
        <dbReference type="ChEBI" id="CHEBI:58359"/>
        <dbReference type="ChEBI" id="CHEBI:456216"/>
        <dbReference type="EC" id="6.3.4.2"/>
    </reaction>
</comment>
<comment type="catalytic activity">
    <reaction evidence="1">
        <text>L-glutamine + H2O = L-glutamate + NH4(+)</text>
        <dbReference type="Rhea" id="RHEA:15889"/>
        <dbReference type="ChEBI" id="CHEBI:15377"/>
        <dbReference type="ChEBI" id="CHEBI:28938"/>
        <dbReference type="ChEBI" id="CHEBI:29985"/>
        <dbReference type="ChEBI" id="CHEBI:58359"/>
    </reaction>
</comment>
<comment type="catalytic activity">
    <reaction evidence="1">
        <text>UTP + NH4(+) + ATP = CTP + ADP + phosphate + 2 H(+)</text>
        <dbReference type="Rhea" id="RHEA:16597"/>
        <dbReference type="ChEBI" id="CHEBI:15378"/>
        <dbReference type="ChEBI" id="CHEBI:28938"/>
        <dbReference type="ChEBI" id="CHEBI:30616"/>
        <dbReference type="ChEBI" id="CHEBI:37563"/>
        <dbReference type="ChEBI" id="CHEBI:43474"/>
        <dbReference type="ChEBI" id="CHEBI:46398"/>
        <dbReference type="ChEBI" id="CHEBI:456216"/>
    </reaction>
</comment>
<comment type="activity regulation">
    <text evidence="1">Allosterically activated by GTP, when glutamine is the substrate; GTP has no effect on the reaction when ammonia is the substrate. The allosteric effector GTP functions by stabilizing the protein conformation that binds the tetrahedral intermediate(s) formed during glutamine hydrolysis. Inhibited by the product CTP, via allosteric rather than competitive inhibition.</text>
</comment>
<comment type="pathway">
    <text evidence="1">Pyrimidine metabolism; CTP biosynthesis via de novo pathway; CTP from UDP: step 2/2.</text>
</comment>
<comment type="subunit">
    <text evidence="1">Homotetramer.</text>
</comment>
<comment type="miscellaneous">
    <text evidence="1">CTPSs have evolved a hybrid strategy for distinguishing between UTP and CTP. The overlapping regions of the product feedback inhibitory and substrate sites recognize a common feature in both compounds, the triphosphate moiety. To differentiate isosteric substrate and product pyrimidine rings, an additional pocket far from the expected kinase/ligase catalytic site, specifically recognizes the cytosine and ribose portions of the product inhibitor.</text>
</comment>
<comment type="similarity">
    <text evidence="1">Belongs to the CTP synthase family.</text>
</comment>
<organism>
    <name type="scientific">Caldanaerobacter subterraneus subsp. tengcongensis (strain DSM 15242 / JCM 11007 / NBRC 100824 / MB4)</name>
    <name type="common">Thermoanaerobacter tengcongensis</name>
    <dbReference type="NCBI Taxonomy" id="273068"/>
    <lineage>
        <taxon>Bacteria</taxon>
        <taxon>Bacillati</taxon>
        <taxon>Bacillota</taxon>
        <taxon>Clostridia</taxon>
        <taxon>Thermoanaerobacterales</taxon>
        <taxon>Thermoanaerobacteraceae</taxon>
        <taxon>Caldanaerobacter</taxon>
    </lineage>
</organism>
<evidence type="ECO:0000255" key="1">
    <source>
        <dbReference type="HAMAP-Rule" id="MF_01227"/>
    </source>
</evidence>
<accession>Q8R720</accession>
<reference key="1">
    <citation type="journal article" date="2002" name="Genome Res.">
        <title>A complete sequence of the T. tengcongensis genome.</title>
        <authorList>
            <person name="Bao Q."/>
            <person name="Tian Y."/>
            <person name="Li W."/>
            <person name="Xu Z."/>
            <person name="Xuan Z."/>
            <person name="Hu S."/>
            <person name="Dong W."/>
            <person name="Yang J."/>
            <person name="Chen Y."/>
            <person name="Xue Y."/>
            <person name="Xu Y."/>
            <person name="Lai X."/>
            <person name="Huang L."/>
            <person name="Dong X."/>
            <person name="Ma Y."/>
            <person name="Ling L."/>
            <person name="Tan H."/>
            <person name="Chen R."/>
            <person name="Wang J."/>
            <person name="Yu J."/>
            <person name="Yang H."/>
        </authorList>
    </citation>
    <scope>NUCLEOTIDE SEQUENCE [LARGE SCALE GENOMIC DNA]</scope>
    <source>
        <strain>DSM 15242 / JCM 11007 / NBRC 100824 / MB4</strain>
    </source>
</reference>
<protein>
    <recommendedName>
        <fullName evidence="1">CTP synthase</fullName>
        <ecNumber evidence="1">6.3.4.2</ecNumber>
    </recommendedName>
    <alternativeName>
        <fullName evidence="1">Cytidine 5'-triphosphate synthase</fullName>
    </alternativeName>
    <alternativeName>
        <fullName evidence="1">Cytidine triphosphate synthetase</fullName>
        <shortName evidence="1">CTP synthetase</shortName>
        <shortName evidence="1">CTPS</shortName>
    </alternativeName>
    <alternativeName>
        <fullName evidence="1">UTP--ammonia ligase</fullName>
    </alternativeName>
</protein>
<feature type="chain" id="PRO_0000138243" description="CTP synthase">
    <location>
        <begin position="1"/>
        <end position="537"/>
    </location>
</feature>
<feature type="domain" description="Glutamine amidotransferase type-1" evidence="1">
    <location>
        <begin position="292"/>
        <end position="534"/>
    </location>
</feature>
<feature type="region of interest" description="Amidoligase domain" evidence="1">
    <location>
        <begin position="1"/>
        <end position="267"/>
    </location>
</feature>
<feature type="active site" description="Nucleophile; for glutamine hydrolysis" evidence="1">
    <location>
        <position position="381"/>
    </location>
</feature>
<feature type="active site" evidence="1">
    <location>
        <position position="507"/>
    </location>
</feature>
<feature type="active site" evidence="1">
    <location>
        <position position="509"/>
    </location>
</feature>
<feature type="binding site" evidence="1">
    <location>
        <position position="13"/>
    </location>
    <ligand>
        <name>CTP</name>
        <dbReference type="ChEBI" id="CHEBI:37563"/>
        <note>allosteric inhibitor</note>
    </ligand>
</feature>
<feature type="binding site" evidence="1">
    <location>
        <position position="13"/>
    </location>
    <ligand>
        <name>UTP</name>
        <dbReference type="ChEBI" id="CHEBI:46398"/>
    </ligand>
</feature>
<feature type="binding site" evidence="1">
    <location>
        <begin position="14"/>
        <end position="19"/>
    </location>
    <ligand>
        <name>ATP</name>
        <dbReference type="ChEBI" id="CHEBI:30616"/>
    </ligand>
</feature>
<feature type="binding site" evidence="1">
    <location>
        <position position="54"/>
    </location>
    <ligand>
        <name>L-glutamine</name>
        <dbReference type="ChEBI" id="CHEBI:58359"/>
    </ligand>
</feature>
<feature type="binding site" evidence="1">
    <location>
        <position position="71"/>
    </location>
    <ligand>
        <name>ATP</name>
        <dbReference type="ChEBI" id="CHEBI:30616"/>
    </ligand>
</feature>
<feature type="binding site" evidence="1">
    <location>
        <position position="71"/>
    </location>
    <ligand>
        <name>Mg(2+)</name>
        <dbReference type="ChEBI" id="CHEBI:18420"/>
    </ligand>
</feature>
<feature type="binding site" evidence="1">
    <location>
        <position position="141"/>
    </location>
    <ligand>
        <name>Mg(2+)</name>
        <dbReference type="ChEBI" id="CHEBI:18420"/>
    </ligand>
</feature>
<feature type="binding site" evidence="1">
    <location>
        <begin position="148"/>
        <end position="150"/>
    </location>
    <ligand>
        <name>CTP</name>
        <dbReference type="ChEBI" id="CHEBI:37563"/>
        <note>allosteric inhibitor</note>
    </ligand>
</feature>
<feature type="binding site" evidence="1">
    <location>
        <begin position="188"/>
        <end position="193"/>
    </location>
    <ligand>
        <name>CTP</name>
        <dbReference type="ChEBI" id="CHEBI:37563"/>
        <note>allosteric inhibitor</note>
    </ligand>
</feature>
<feature type="binding site" evidence="1">
    <location>
        <begin position="188"/>
        <end position="193"/>
    </location>
    <ligand>
        <name>UTP</name>
        <dbReference type="ChEBI" id="CHEBI:46398"/>
    </ligand>
</feature>
<feature type="binding site" evidence="1">
    <location>
        <position position="224"/>
    </location>
    <ligand>
        <name>CTP</name>
        <dbReference type="ChEBI" id="CHEBI:37563"/>
        <note>allosteric inhibitor</note>
    </ligand>
</feature>
<feature type="binding site" evidence="1">
    <location>
        <position position="224"/>
    </location>
    <ligand>
        <name>UTP</name>
        <dbReference type="ChEBI" id="CHEBI:46398"/>
    </ligand>
</feature>
<feature type="binding site" evidence="1">
    <location>
        <begin position="240"/>
        <end position="242"/>
    </location>
    <ligand>
        <name>ATP</name>
        <dbReference type="ChEBI" id="CHEBI:30616"/>
    </ligand>
</feature>
<feature type="binding site" evidence="1">
    <location>
        <position position="354"/>
    </location>
    <ligand>
        <name>L-glutamine</name>
        <dbReference type="ChEBI" id="CHEBI:58359"/>
    </ligand>
</feature>
<feature type="binding site" evidence="1">
    <location>
        <begin position="382"/>
        <end position="385"/>
    </location>
    <ligand>
        <name>L-glutamine</name>
        <dbReference type="ChEBI" id="CHEBI:58359"/>
    </ligand>
</feature>
<feature type="binding site" evidence="1">
    <location>
        <position position="405"/>
    </location>
    <ligand>
        <name>L-glutamine</name>
        <dbReference type="ChEBI" id="CHEBI:58359"/>
    </ligand>
</feature>
<feature type="binding site" evidence="1">
    <location>
        <position position="462"/>
    </location>
    <ligand>
        <name>L-glutamine</name>
        <dbReference type="ChEBI" id="CHEBI:58359"/>
    </ligand>
</feature>
<dbReference type="EC" id="6.3.4.2" evidence="1"/>
<dbReference type="EMBL" id="AE008691">
    <property type="protein sequence ID" value="AAM25729.1"/>
    <property type="molecule type" value="Genomic_DNA"/>
</dbReference>
<dbReference type="RefSeq" id="WP_011026604.1">
    <property type="nucleotide sequence ID" value="NC_003869.1"/>
</dbReference>
<dbReference type="SMR" id="Q8R720"/>
<dbReference type="STRING" id="273068.TTE2609"/>
<dbReference type="KEGG" id="tte:TTE2609"/>
<dbReference type="eggNOG" id="COG0504">
    <property type="taxonomic scope" value="Bacteria"/>
</dbReference>
<dbReference type="HOGENOM" id="CLU_011675_5_0_9"/>
<dbReference type="OrthoDB" id="9801107at2"/>
<dbReference type="UniPathway" id="UPA00159">
    <property type="reaction ID" value="UER00277"/>
</dbReference>
<dbReference type="Proteomes" id="UP000000555">
    <property type="component" value="Chromosome"/>
</dbReference>
<dbReference type="GO" id="GO:0005829">
    <property type="term" value="C:cytosol"/>
    <property type="evidence" value="ECO:0007669"/>
    <property type="project" value="TreeGrafter"/>
</dbReference>
<dbReference type="GO" id="GO:0005524">
    <property type="term" value="F:ATP binding"/>
    <property type="evidence" value="ECO:0007669"/>
    <property type="project" value="UniProtKB-KW"/>
</dbReference>
<dbReference type="GO" id="GO:0003883">
    <property type="term" value="F:CTP synthase activity"/>
    <property type="evidence" value="ECO:0007669"/>
    <property type="project" value="UniProtKB-UniRule"/>
</dbReference>
<dbReference type="GO" id="GO:0004359">
    <property type="term" value="F:glutaminase activity"/>
    <property type="evidence" value="ECO:0007669"/>
    <property type="project" value="RHEA"/>
</dbReference>
<dbReference type="GO" id="GO:0042802">
    <property type="term" value="F:identical protein binding"/>
    <property type="evidence" value="ECO:0007669"/>
    <property type="project" value="TreeGrafter"/>
</dbReference>
<dbReference type="GO" id="GO:0046872">
    <property type="term" value="F:metal ion binding"/>
    <property type="evidence" value="ECO:0007669"/>
    <property type="project" value="UniProtKB-KW"/>
</dbReference>
<dbReference type="GO" id="GO:0044210">
    <property type="term" value="P:'de novo' CTP biosynthetic process"/>
    <property type="evidence" value="ECO:0007669"/>
    <property type="project" value="UniProtKB-UniRule"/>
</dbReference>
<dbReference type="GO" id="GO:0019856">
    <property type="term" value="P:pyrimidine nucleobase biosynthetic process"/>
    <property type="evidence" value="ECO:0007669"/>
    <property type="project" value="TreeGrafter"/>
</dbReference>
<dbReference type="CDD" id="cd03113">
    <property type="entry name" value="CTPS_N"/>
    <property type="match status" value="1"/>
</dbReference>
<dbReference type="CDD" id="cd01746">
    <property type="entry name" value="GATase1_CTP_Synthase"/>
    <property type="match status" value="1"/>
</dbReference>
<dbReference type="FunFam" id="3.40.50.300:FF:000009">
    <property type="entry name" value="CTP synthase"/>
    <property type="match status" value="1"/>
</dbReference>
<dbReference type="FunFam" id="3.40.50.880:FF:000002">
    <property type="entry name" value="CTP synthase"/>
    <property type="match status" value="1"/>
</dbReference>
<dbReference type="Gene3D" id="3.40.50.880">
    <property type="match status" value="1"/>
</dbReference>
<dbReference type="Gene3D" id="3.40.50.300">
    <property type="entry name" value="P-loop containing nucleotide triphosphate hydrolases"/>
    <property type="match status" value="1"/>
</dbReference>
<dbReference type="HAMAP" id="MF_01227">
    <property type="entry name" value="PyrG"/>
    <property type="match status" value="1"/>
</dbReference>
<dbReference type="InterPro" id="IPR029062">
    <property type="entry name" value="Class_I_gatase-like"/>
</dbReference>
<dbReference type="InterPro" id="IPR004468">
    <property type="entry name" value="CTP_synthase"/>
</dbReference>
<dbReference type="InterPro" id="IPR017456">
    <property type="entry name" value="CTP_synthase_N"/>
</dbReference>
<dbReference type="InterPro" id="IPR017926">
    <property type="entry name" value="GATASE"/>
</dbReference>
<dbReference type="InterPro" id="IPR033828">
    <property type="entry name" value="GATase1_CTP_Synthase"/>
</dbReference>
<dbReference type="InterPro" id="IPR027417">
    <property type="entry name" value="P-loop_NTPase"/>
</dbReference>
<dbReference type="NCBIfam" id="NF003792">
    <property type="entry name" value="PRK05380.1"/>
    <property type="match status" value="1"/>
</dbReference>
<dbReference type="NCBIfam" id="TIGR00337">
    <property type="entry name" value="PyrG"/>
    <property type="match status" value="1"/>
</dbReference>
<dbReference type="PANTHER" id="PTHR11550">
    <property type="entry name" value="CTP SYNTHASE"/>
    <property type="match status" value="1"/>
</dbReference>
<dbReference type="PANTHER" id="PTHR11550:SF0">
    <property type="entry name" value="CTP SYNTHASE-RELATED"/>
    <property type="match status" value="1"/>
</dbReference>
<dbReference type="Pfam" id="PF06418">
    <property type="entry name" value="CTP_synth_N"/>
    <property type="match status" value="1"/>
</dbReference>
<dbReference type="Pfam" id="PF00117">
    <property type="entry name" value="GATase"/>
    <property type="match status" value="1"/>
</dbReference>
<dbReference type="SUPFAM" id="SSF52317">
    <property type="entry name" value="Class I glutamine amidotransferase-like"/>
    <property type="match status" value="1"/>
</dbReference>
<dbReference type="SUPFAM" id="SSF52540">
    <property type="entry name" value="P-loop containing nucleoside triphosphate hydrolases"/>
    <property type="match status" value="1"/>
</dbReference>
<dbReference type="PROSITE" id="PS51273">
    <property type="entry name" value="GATASE_TYPE_1"/>
    <property type="match status" value="1"/>
</dbReference>